<protein>
    <recommendedName>
        <fullName evidence="1">Elongation factor G</fullName>
        <shortName evidence="1">EF-G</shortName>
    </recommendedName>
</protein>
<dbReference type="EMBL" id="CP000411">
    <property type="protein sequence ID" value="ABJ57186.1"/>
    <property type="molecule type" value="Genomic_DNA"/>
</dbReference>
<dbReference type="RefSeq" id="WP_002819197.1">
    <property type="nucleotide sequence ID" value="NC_008528.1"/>
</dbReference>
<dbReference type="SMR" id="Q04ED6"/>
<dbReference type="STRING" id="203123.OEOE_1314"/>
<dbReference type="GeneID" id="75065582"/>
<dbReference type="KEGG" id="ooe:OEOE_1314"/>
<dbReference type="eggNOG" id="COG0480">
    <property type="taxonomic scope" value="Bacteria"/>
</dbReference>
<dbReference type="HOGENOM" id="CLU_002794_4_1_9"/>
<dbReference type="Proteomes" id="UP000000774">
    <property type="component" value="Chromosome"/>
</dbReference>
<dbReference type="GO" id="GO:0005737">
    <property type="term" value="C:cytoplasm"/>
    <property type="evidence" value="ECO:0007669"/>
    <property type="project" value="UniProtKB-SubCell"/>
</dbReference>
<dbReference type="GO" id="GO:0005525">
    <property type="term" value="F:GTP binding"/>
    <property type="evidence" value="ECO:0007669"/>
    <property type="project" value="UniProtKB-UniRule"/>
</dbReference>
<dbReference type="GO" id="GO:0003924">
    <property type="term" value="F:GTPase activity"/>
    <property type="evidence" value="ECO:0007669"/>
    <property type="project" value="InterPro"/>
</dbReference>
<dbReference type="GO" id="GO:0003746">
    <property type="term" value="F:translation elongation factor activity"/>
    <property type="evidence" value="ECO:0007669"/>
    <property type="project" value="UniProtKB-UniRule"/>
</dbReference>
<dbReference type="GO" id="GO:0032790">
    <property type="term" value="P:ribosome disassembly"/>
    <property type="evidence" value="ECO:0007669"/>
    <property type="project" value="TreeGrafter"/>
</dbReference>
<dbReference type="CDD" id="cd01886">
    <property type="entry name" value="EF-G"/>
    <property type="match status" value="1"/>
</dbReference>
<dbReference type="CDD" id="cd16262">
    <property type="entry name" value="EFG_III"/>
    <property type="match status" value="1"/>
</dbReference>
<dbReference type="CDD" id="cd01434">
    <property type="entry name" value="EFG_mtEFG1_IV"/>
    <property type="match status" value="1"/>
</dbReference>
<dbReference type="CDD" id="cd03713">
    <property type="entry name" value="EFG_mtEFG_C"/>
    <property type="match status" value="1"/>
</dbReference>
<dbReference type="CDD" id="cd04088">
    <property type="entry name" value="EFG_mtEFG_II"/>
    <property type="match status" value="1"/>
</dbReference>
<dbReference type="FunFam" id="2.40.30.10:FF:000006">
    <property type="entry name" value="Elongation factor G"/>
    <property type="match status" value="1"/>
</dbReference>
<dbReference type="FunFam" id="3.30.230.10:FF:000003">
    <property type="entry name" value="Elongation factor G"/>
    <property type="match status" value="1"/>
</dbReference>
<dbReference type="FunFam" id="3.30.70.240:FF:000001">
    <property type="entry name" value="Elongation factor G"/>
    <property type="match status" value="1"/>
</dbReference>
<dbReference type="FunFam" id="3.30.70.870:FF:000001">
    <property type="entry name" value="Elongation factor G"/>
    <property type="match status" value="1"/>
</dbReference>
<dbReference type="FunFam" id="3.40.50.300:FF:000029">
    <property type="entry name" value="Elongation factor G"/>
    <property type="match status" value="1"/>
</dbReference>
<dbReference type="Gene3D" id="3.30.230.10">
    <property type="match status" value="1"/>
</dbReference>
<dbReference type="Gene3D" id="3.30.70.240">
    <property type="match status" value="1"/>
</dbReference>
<dbReference type="Gene3D" id="3.30.70.870">
    <property type="entry name" value="Elongation Factor G (Translational Gtpase), domain 3"/>
    <property type="match status" value="1"/>
</dbReference>
<dbReference type="Gene3D" id="3.40.50.300">
    <property type="entry name" value="P-loop containing nucleotide triphosphate hydrolases"/>
    <property type="match status" value="1"/>
</dbReference>
<dbReference type="Gene3D" id="2.40.30.10">
    <property type="entry name" value="Translation factors"/>
    <property type="match status" value="1"/>
</dbReference>
<dbReference type="HAMAP" id="MF_00054_B">
    <property type="entry name" value="EF_G_EF_2_B"/>
    <property type="match status" value="1"/>
</dbReference>
<dbReference type="InterPro" id="IPR053905">
    <property type="entry name" value="EF-G-like_DII"/>
</dbReference>
<dbReference type="InterPro" id="IPR041095">
    <property type="entry name" value="EFG_II"/>
</dbReference>
<dbReference type="InterPro" id="IPR009022">
    <property type="entry name" value="EFG_III"/>
</dbReference>
<dbReference type="InterPro" id="IPR035647">
    <property type="entry name" value="EFG_III/V"/>
</dbReference>
<dbReference type="InterPro" id="IPR047872">
    <property type="entry name" value="EFG_IV"/>
</dbReference>
<dbReference type="InterPro" id="IPR035649">
    <property type="entry name" value="EFG_V"/>
</dbReference>
<dbReference type="InterPro" id="IPR000640">
    <property type="entry name" value="EFG_V-like"/>
</dbReference>
<dbReference type="InterPro" id="IPR031157">
    <property type="entry name" value="G_TR_CS"/>
</dbReference>
<dbReference type="InterPro" id="IPR027417">
    <property type="entry name" value="P-loop_NTPase"/>
</dbReference>
<dbReference type="InterPro" id="IPR020568">
    <property type="entry name" value="Ribosomal_Su5_D2-typ_SF"/>
</dbReference>
<dbReference type="InterPro" id="IPR014721">
    <property type="entry name" value="Ribsml_uS5_D2-typ_fold_subgr"/>
</dbReference>
<dbReference type="InterPro" id="IPR005225">
    <property type="entry name" value="Small_GTP-bd"/>
</dbReference>
<dbReference type="InterPro" id="IPR000795">
    <property type="entry name" value="T_Tr_GTP-bd_dom"/>
</dbReference>
<dbReference type="InterPro" id="IPR009000">
    <property type="entry name" value="Transl_B-barrel_sf"/>
</dbReference>
<dbReference type="InterPro" id="IPR004540">
    <property type="entry name" value="Transl_elong_EFG/EF2"/>
</dbReference>
<dbReference type="InterPro" id="IPR005517">
    <property type="entry name" value="Transl_elong_EFG/EF2_IV"/>
</dbReference>
<dbReference type="NCBIfam" id="TIGR00484">
    <property type="entry name" value="EF-G"/>
    <property type="match status" value="1"/>
</dbReference>
<dbReference type="NCBIfam" id="NF009379">
    <property type="entry name" value="PRK12740.1-3"/>
    <property type="match status" value="1"/>
</dbReference>
<dbReference type="NCBIfam" id="NF009381">
    <property type="entry name" value="PRK12740.1-5"/>
    <property type="match status" value="1"/>
</dbReference>
<dbReference type="NCBIfam" id="TIGR00231">
    <property type="entry name" value="small_GTP"/>
    <property type="match status" value="1"/>
</dbReference>
<dbReference type="PANTHER" id="PTHR43261:SF1">
    <property type="entry name" value="RIBOSOME-RELEASING FACTOR 2, MITOCHONDRIAL"/>
    <property type="match status" value="1"/>
</dbReference>
<dbReference type="PANTHER" id="PTHR43261">
    <property type="entry name" value="TRANSLATION ELONGATION FACTOR G-RELATED"/>
    <property type="match status" value="1"/>
</dbReference>
<dbReference type="Pfam" id="PF22042">
    <property type="entry name" value="EF-G_D2"/>
    <property type="match status" value="1"/>
</dbReference>
<dbReference type="Pfam" id="PF00679">
    <property type="entry name" value="EFG_C"/>
    <property type="match status" value="1"/>
</dbReference>
<dbReference type="Pfam" id="PF14492">
    <property type="entry name" value="EFG_III"/>
    <property type="match status" value="1"/>
</dbReference>
<dbReference type="Pfam" id="PF03764">
    <property type="entry name" value="EFG_IV"/>
    <property type="match status" value="1"/>
</dbReference>
<dbReference type="Pfam" id="PF00009">
    <property type="entry name" value="GTP_EFTU"/>
    <property type="match status" value="1"/>
</dbReference>
<dbReference type="PRINTS" id="PR00315">
    <property type="entry name" value="ELONGATNFCT"/>
</dbReference>
<dbReference type="SMART" id="SM00838">
    <property type="entry name" value="EFG_C"/>
    <property type="match status" value="1"/>
</dbReference>
<dbReference type="SMART" id="SM00889">
    <property type="entry name" value="EFG_IV"/>
    <property type="match status" value="1"/>
</dbReference>
<dbReference type="SUPFAM" id="SSF54980">
    <property type="entry name" value="EF-G C-terminal domain-like"/>
    <property type="match status" value="2"/>
</dbReference>
<dbReference type="SUPFAM" id="SSF52540">
    <property type="entry name" value="P-loop containing nucleoside triphosphate hydrolases"/>
    <property type="match status" value="1"/>
</dbReference>
<dbReference type="SUPFAM" id="SSF54211">
    <property type="entry name" value="Ribosomal protein S5 domain 2-like"/>
    <property type="match status" value="1"/>
</dbReference>
<dbReference type="SUPFAM" id="SSF50447">
    <property type="entry name" value="Translation proteins"/>
    <property type="match status" value="1"/>
</dbReference>
<dbReference type="PROSITE" id="PS00301">
    <property type="entry name" value="G_TR_1"/>
    <property type="match status" value="1"/>
</dbReference>
<dbReference type="PROSITE" id="PS51722">
    <property type="entry name" value="G_TR_2"/>
    <property type="match status" value="1"/>
</dbReference>
<sequence length="702" mass="77965">MDTREFPLDRTRNIGIMAHIDAGKTTTTERILYYTGKIHKIGETHDGASQMDFMDQEKERGITIQSAATTAIWHGFHEQWKDTPYRVNIIDTPGHVDFTIEVERSLRVLDGAIAVLDGAAGVEPQTETVWRQATTYAVPRLVFVNKMDKMGADFQMSVDSLKERLDVNAKAIQWPIGAEDDFAGVIDLIQREAWYPDDKLGTEWEKRPIPDDLKDLVEEKRDELIEAVADVDDSLMEKYLGEEEITVDDLKAAIRRATLALKFYPVLAGSAYKDKGVQLLLDAVVDYLPSPLEVRPYTATDPDTGDEVDLKADDKKPFAALAFKIMTDPYVGRLTFLRVYTGTLKSGSYVQNTTKDTRERVGRLLQMHAITRREIDEVFSGDIAAAIGLKATSTGDSLTSVDRPLVLESMEFPDPVIQMAVEPKTKADQEKMAEALQKLSEEDPSFHAETNSETGQTLISGMGELHLDIMVDRMRREFNVDVNVGTPQVAYREAFTKTVQAQGKYIRQSGGKGQYGDVWIEFSPNDEGKGFEFDNAIVGGAVPREYIPAVEQGLKEAMQSGPLAGYPLVDLKAKLYDGSYHEVDSSEAAFKIAASMSLREASKTAGAVILEPIMKVSIVSPIDNLGDVMGHVSARRGMIEDQETHGNTVTVTSKIPLAEMFGYTTTLRSATQGRGTFQMFFDHYEAVPRNVQEDIIKNAGKE</sequence>
<comment type="function">
    <text evidence="1">Catalyzes the GTP-dependent ribosomal translocation step during translation elongation. During this step, the ribosome changes from the pre-translocational (PRE) to the post-translocational (POST) state as the newly formed A-site-bound peptidyl-tRNA and P-site-bound deacylated tRNA move to the P and E sites, respectively. Catalyzes the coordinated movement of the two tRNA molecules, the mRNA and conformational changes in the ribosome.</text>
</comment>
<comment type="subcellular location">
    <subcellularLocation>
        <location evidence="1">Cytoplasm</location>
    </subcellularLocation>
</comment>
<comment type="similarity">
    <text evidence="1">Belongs to the TRAFAC class translation factor GTPase superfamily. Classic translation factor GTPase family. EF-G/EF-2 subfamily.</text>
</comment>
<organism>
    <name type="scientific">Oenococcus oeni (strain ATCC BAA-331 / PSU-1)</name>
    <dbReference type="NCBI Taxonomy" id="203123"/>
    <lineage>
        <taxon>Bacteria</taxon>
        <taxon>Bacillati</taxon>
        <taxon>Bacillota</taxon>
        <taxon>Bacilli</taxon>
        <taxon>Lactobacillales</taxon>
        <taxon>Lactobacillaceae</taxon>
        <taxon>Oenococcus</taxon>
    </lineage>
</organism>
<evidence type="ECO:0000255" key="1">
    <source>
        <dbReference type="HAMAP-Rule" id="MF_00054"/>
    </source>
</evidence>
<keyword id="KW-0963">Cytoplasm</keyword>
<keyword id="KW-0251">Elongation factor</keyword>
<keyword id="KW-0342">GTP-binding</keyword>
<keyword id="KW-0547">Nucleotide-binding</keyword>
<keyword id="KW-0648">Protein biosynthesis</keyword>
<keyword id="KW-1185">Reference proteome</keyword>
<accession>Q04ED6</accession>
<proteinExistence type="inferred from homology"/>
<name>EFG_OENOB</name>
<reference key="1">
    <citation type="journal article" date="2006" name="Proc. Natl. Acad. Sci. U.S.A.">
        <title>Comparative genomics of the lactic acid bacteria.</title>
        <authorList>
            <person name="Makarova K.S."/>
            <person name="Slesarev A."/>
            <person name="Wolf Y.I."/>
            <person name="Sorokin A."/>
            <person name="Mirkin B."/>
            <person name="Koonin E.V."/>
            <person name="Pavlov A."/>
            <person name="Pavlova N."/>
            <person name="Karamychev V."/>
            <person name="Polouchine N."/>
            <person name="Shakhova V."/>
            <person name="Grigoriev I."/>
            <person name="Lou Y."/>
            <person name="Rohksar D."/>
            <person name="Lucas S."/>
            <person name="Huang K."/>
            <person name="Goodstein D.M."/>
            <person name="Hawkins T."/>
            <person name="Plengvidhya V."/>
            <person name="Welker D."/>
            <person name="Hughes J."/>
            <person name="Goh Y."/>
            <person name="Benson A."/>
            <person name="Baldwin K."/>
            <person name="Lee J.-H."/>
            <person name="Diaz-Muniz I."/>
            <person name="Dosti B."/>
            <person name="Smeianov V."/>
            <person name="Wechter W."/>
            <person name="Barabote R."/>
            <person name="Lorca G."/>
            <person name="Altermann E."/>
            <person name="Barrangou R."/>
            <person name="Ganesan B."/>
            <person name="Xie Y."/>
            <person name="Rawsthorne H."/>
            <person name="Tamir D."/>
            <person name="Parker C."/>
            <person name="Breidt F."/>
            <person name="Broadbent J.R."/>
            <person name="Hutkins R."/>
            <person name="O'Sullivan D."/>
            <person name="Steele J."/>
            <person name="Unlu G."/>
            <person name="Saier M.H. Jr."/>
            <person name="Klaenhammer T."/>
            <person name="Richardson P."/>
            <person name="Kozyavkin S."/>
            <person name="Weimer B.C."/>
            <person name="Mills D.A."/>
        </authorList>
    </citation>
    <scope>NUCLEOTIDE SEQUENCE [LARGE SCALE GENOMIC DNA]</scope>
    <source>
        <strain>ATCC BAA-331 / PSU-1</strain>
    </source>
</reference>
<gene>
    <name evidence="1" type="primary">fusA</name>
    <name type="ordered locus">OEOE_1314</name>
</gene>
<feature type="chain" id="PRO_0000335850" description="Elongation factor G">
    <location>
        <begin position="1"/>
        <end position="702"/>
    </location>
</feature>
<feature type="domain" description="tr-type G">
    <location>
        <begin position="9"/>
        <end position="292"/>
    </location>
</feature>
<feature type="binding site" evidence="1">
    <location>
        <begin position="18"/>
        <end position="25"/>
    </location>
    <ligand>
        <name>GTP</name>
        <dbReference type="ChEBI" id="CHEBI:37565"/>
    </ligand>
</feature>
<feature type="binding site" evidence="1">
    <location>
        <begin position="91"/>
        <end position="95"/>
    </location>
    <ligand>
        <name>GTP</name>
        <dbReference type="ChEBI" id="CHEBI:37565"/>
    </ligand>
</feature>
<feature type="binding site" evidence="1">
    <location>
        <begin position="145"/>
        <end position="148"/>
    </location>
    <ligand>
        <name>GTP</name>
        <dbReference type="ChEBI" id="CHEBI:37565"/>
    </ligand>
</feature>